<protein>
    <recommendedName>
        <fullName evidence="1">Biosynthetic peptidoglycan transglycosylase</fullName>
        <ecNumber evidence="1">2.4.99.28</ecNumber>
    </recommendedName>
    <alternativeName>
        <fullName evidence="1">Glycan polymerase</fullName>
    </alternativeName>
    <alternativeName>
        <fullName evidence="1">Peptidoglycan glycosyltransferase MtgA</fullName>
        <shortName evidence="1">PGT</shortName>
    </alternativeName>
</protein>
<proteinExistence type="inferred from homology"/>
<evidence type="ECO:0000255" key="1">
    <source>
        <dbReference type="HAMAP-Rule" id="MF_00766"/>
    </source>
</evidence>
<feature type="chain" id="PRO_1000133583" description="Biosynthetic peptidoglycan transglycosylase">
    <location>
        <begin position="1"/>
        <end position="225"/>
    </location>
</feature>
<feature type="transmembrane region" description="Helical" evidence="1">
    <location>
        <begin position="8"/>
        <end position="28"/>
    </location>
</feature>
<dbReference type="EC" id="2.4.99.28" evidence="1"/>
<dbReference type="EMBL" id="CP000521">
    <property type="protein sequence ID" value="ABO11421.2"/>
    <property type="molecule type" value="Genomic_DNA"/>
</dbReference>
<dbReference type="RefSeq" id="WP_000642927.1">
    <property type="nucleotide sequence ID" value="NZ_CP053098.1"/>
</dbReference>
<dbReference type="SMR" id="A3M3C7"/>
<dbReference type="CAZy" id="GT51">
    <property type="family name" value="Glycosyltransferase Family 51"/>
</dbReference>
<dbReference type="KEGG" id="acb:A1S_0989"/>
<dbReference type="HOGENOM" id="CLU_006354_1_1_6"/>
<dbReference type="UniPathway" id="UPA00219"/>
<dbReference type="GO" id="GO:0009274">
    <property type="term" value="C:peptidoglycan-based cell wall"/>
    <property type="evidence" value="ECO:0007669"/>
    <property type="project" value="InterPro"/>
</dbReference>
<dbReference type="GO" id="GO:0005886">
    <property type="term" value="C:plasma membrane"/>
    <property type="evidence" value="ECO:0007669"/>
    <property type="project" value="UniProtKB-SubCell"/>
</dbReference>
<dbReference type="GO" id="GO:0016763">
    <property type="term" value="F:pentosyltransferase activity"/>
    <property type="evidence" value="ECO:0007669"/>
    <property type="project" value="InterPro"/>
</dbReference>
<dbReference type="GO" id="GO:0008955">
    <property type="term" value="F:peptidoglycan glycosyltransferase activity"/>
    <property type="evidence" value="ECO:0007669"/>
    <property type="project" value="UniProtKB-UniRule"/>
</dbReference>
<dbReference type="GO" id="GO:0071555">
    <property type="term" value="P:cell wall organization"/>
    <property type="evidence" value="ECO:0007669"/>
    <property type="project" value="UniProtKB-KW"/>
</dbReference>
<dbReference type="GO" id="GO:0009252">
    <property type="term" value="P:peptidoglycan biosynthetic process"/>
    <property type="evidence" value="ECO:0007669"/>
    <property type="project" value="UniProtKB-UniRule"/>
</dbReference>
<dbReference type="GO" id="GO:0008360">
    <property type="term" value="P:regulation of cell shape"/>
    <property type="evidence" value="ECO:0007669"/>
    <property type="project" value="UniProtKB-KW"/>
</dbReference>
<dbReference type="Gene3D" id="1.10.3810.10">
    <property type="entry name" value="Biosynthetic peptidoglycan transglycosylase-like"/>
    <property type="match status" value="1"/>
</dbReference>
<dbReference type="HAMAP" id="MF_00766">
    <property type="entry name" value="PGT_MtgA"/>
    <property type="match status" value="1"/>
</dbReference>
<dbReference type="InterPro" id="IPR001264">
    <property type="entry name" value="Glyco_trans_51"/>
</dbReference>
<dbReference type="InterPro" id="IPR023346">
    <property type="entry name" value="Lysozyme-like_dom_sf"/>
</dbReference>
<dbReference type="InterPro" id="IPR036950">
    <property type="entry name" value="PBP_transglycosylase"/>
</dbReference>
<dbReference type="InterPro" id="IPR011812">
    <property type="entry name" value="Pep_trsgly"/>
</dbReference>
<dbReference type="NCBIfam" id="TIGR02070">
    <property type="entry name" value="mono_pep_trsgly"/>
    <property type="match status" value="1"/>
</dbReference>
<dbReference type="PANTHER" id="PTHR30400:SF0">
    <property type="entry name" value="BIOSYNTHETIC PEPTIDOGLYCAN TRANSGLYCOSYLASE"/>
    <property type="match status" value="1"/>
</dbReference>
<dbReference type="PANTHER" id="PTHR30400">
    <property type="entry name" value="MONOFUNCTIONAL BIOSYNTHETIC PEPTIDOGLYCAN TRANSGLYCOSYLASE"/>
    <property type="match status" value="1"/>
</dbReference>
<dbReference type="Pfam" id="PF00912">
    <property type="entry name" value="Transgly"/>
    <property type="match status" value="1"/>
</dbReference>
<dbReference type="SUPFAM" id="SSF53955">
    <property type="entry name" value="Lysozyme-like"/>
    <property type="match status" value="1"/>
</dbReference>
<sequence length="225" mass="26723">MKAFIVRVLLIFIGAILFIQLWIFSSLVWWRTHEVDTTMFMRIDYWSDTSEPIIHEWLDYDDISDNFKHAILAGEDAKFIHHHGFDWDGIRFALERNNEQGEVVAGGSTVSQQLAKNLFLYNKRSFIRKGQETVATWMMERMWSKRRILEVYMNSVEFGKNLYGVEAAAQYYYGKSAKNLTREQAAFLAALLPDPKYYQDHRNDRKLQYRKRVILRYMNSTQIPE</sequence>
<keyword id="KW-0997">Cell inner membrane</keyword>
<keyword id="KW-1003">Cell membrane</keyword>
<keyword id="KW-0133">Cell shape</keyword>
<keyword id="KW-0961">Cell wall biogenesis/degradation</keyword>
<keyword id="KW-0328">Glycosyltransferase</keyword>
<keyword id="KW-0472">Membrane</keyword>
<keyword id="KW-0573">Peptidoglycan synthesis</keyword>
<keyword id="KW-0808">Transferase</keyword>
<keyword id="KW-0812">Transmembrane</keyword>
<keyword id="KW-1133">Transmembrane helix</keyword>
<accession>A3M3C7</accession>
<comment type="function">
    <text evidence="1">Peptidoglycan polymerase that catalyzes glycan chain elongation from lipid-linked precursors.</text>
</comment>
<comment type="catalytic activity">
    <reaction evidence="1">
        <text>[GlcNAc-(1-&gt;4)-Mur2Ac(oyl-L-Ala-gamma-D-Glu-L-Lys-D-Ala-D-Ala)](n)-di-trans,octa-cis-undecaprenyl diphosphate + beta-D-GlcNAc-(1-&gt;4)-Mur2Ac(oyl-L-Ala-gamma-D-Glu-L-Lys-D-Ala-D-Ala)-di-trans,octa-cis-undecaprenyl diphosphate = [GlcNAc-(1-&gt;4)-Mur2Ac(oyl-L-Ala-gamma-D-Glu-L-Lys-D-Ala-D-Ala)](n+1)-di-trans,octa-cis-undecaprenyl diphosphate + di-trans,octa-cis-undecaprenyl diphosphate + H(+)</text>
        <dbReference type="Rhea" id="RHEA:23708"/>
        <dbReference type="Rhea" id="RHEA-COMP:9602"/>
        <dbReference type="Rhea" id="RHEA-COMP:9603"/>
        <dbReference type="ChEBI" id="CHEBI:15378"/>
        <dbReference type="ChEBI" id="CHEBI:58405"/>
        <dbReference type="ChEBI" id="CHEBI:60033"/>
        <dbReference type="ChEBI" id="CHEBI:78435"/>
        <dbReference type="EC" id="2.4.99.28"/>
    </reaction>
</comment>
<comment type="pathway">
    <text evidence="1">Cell wall biogenesis; peptidoglycan biosynthesis.</text>
</comment>
<comment type="subcellular location">
    <subcellularLocation>
        <location evidence="1">Cell inner membrane</location>
        <topology evidence="1">Single-pass membrane protein</topology>
    </subcellularLocation>
</comment>
<comment type="similarity">
    <text evidence="1">Belongs to the glycosyltransferase 51 family.</text>
</comment>
<reference key="1">
    <citation type="journal article" date="2007" name="Genes Dev.">
        <title>New insights into Acinetobacter baumannii pathogenesis revealed by high-density pyrosequencing and transposon mutagenesis.</title>
        <authorList>
            <person name="Smith M.G."/>
            <person name="Gianoulis T.A."/>
            <person name="Pukatzki S."/>
            <person name="Mekalanos J.J."/>
            <person name="Ornston L.N."/>
            <person name="Gerstein M."/>
            <person name="Snyder M."/>
        </authorList>
    </citation>
    <scope>NUCLEOTIDE SEQUENCE [LARGE SCALE GENOMIC DNA]</scope>
    <source>
        <strain>ATCC 17978 / DSM 105126 / CIP 53.77 / LMG 1025 / NCDC KC755 / 5377</strain>
    </source>
</reference>
<gene>
    <name evidence="1" type="primary">mtgA</name>
    <name type="ordered locus">A1S_0989</name>
</gene>
<name>MTGA_ACIBT</name>
<organism>
    <name type="scientific">Acinetobacter baumannii (strain ATCC 17978 / DSM 105126 / CIP 53.77 / LMG 1025 / NCDC KC755 / 5377)</name>
    <dbReference type="NCBI Taxonomy" id="400667"/>
    <lineage>
        <taxon>Bacteria</taxon>
        <taxon>Pseudomonadati</taxon>
        <taxon>Pseudomonadota</taxon>
        <taxon>Gammaproteobacteria</taxon>
        <taxon>Moraxellales</taxon>
        <taxon>Moraxellaceae</taxon>
        <taxon>Acinetobacter</taxon>
        <taxon>Acinetobacter calcoaceticus/baumannii complex</taxon>
    </lineage>
</organism>